<accession>Q8DEC6</accession>
<proteinExistence type="inferred from homology"/>
<evidence type="ECO:0000255" key="1">
    <source>
        <dbReference type="HAMAP-Rule" id="MF_01454"/>
    </source>
</evidence>
<evidence type="ECO:0000255" key="2">
    <source>
        <dbReference type="PROSITE-ProRule" id="PRU01231"/>
    </source>
</evidence>
<evidence type="ECO:0000256" key="3">
    <source>
        <dbReference type="SAM" id="MobiDB-lite"/>
    </source>
</evidence>
<name>OBG_VIBVU</name>
<dbReference type="EC" id="3.6.5.-" evidence="1"/>
<dbReference type="EMBL" id="AE016795">
    <property type="protein sequence ID" value="AAO09181.1"/>
    <property type="molecule type" value="Genomic_DNA"/>
</dbReference>
<dbReference type="RefSeq" id="WP_011078748.1">
    <property type="nucleotide sequence ID" value="NC_004459.3"/>
</dbReference>
<dbReference type="SMR" id="Q8DEC6"/>
<dbReference type="KEGG" id="vvu:VV1_0669"/>
<dbReference type="HOGENOM" id="CLU_011747_2_0_6"/>
<dbReference type="Proteomes" id="UP000002275">
    <property type="component" value="Chromosome 1"/>
</dbReference>
<dbReference type="GO" id="GO:0005737">
    <property type="term" value="C:cytoplasm"/>
    <property type="evidence" value="ECO:0007669"/>
    <property type="project" value="UniProtKB-SubCell"/>
</dbReference>
<dbReference type="GO" id="GO:0005525">
    <property type="term" value="F:GTP binding"/>
    <property type="evidence" value="ECO:0007669"/>
    <property type="project" value="UniProtKB-UniRule"/>
</dbReference>
<dbReference type="GO" id="GO:0003924">
    <property type="term" value="F:GTPase activity"/>
    <property type="evidence" value="ECO:0007669"/>
    <property type="project" value="UniProtKB-UniRule"/>
</dbReference>
<dbReference type="GO" id="GO:0000287">
    <property type="term" value="F:magnesium ion binding"/>
    <property type="evidence" value="ECO:0007669"/>
    <property type="project" value="InterPro"/>
</dbReference>
<dbReference type="GO" id="GO:0042254">
    <property type="term" value="P:ribosome biogenesis"/>
    <property type="evidence" value="ECO:0007669"/>
    <property type="project" value="UniProtKB-UniRule"/>
</dbReference>
<dbReference type="CDD" id="cd01898">
    <property type="entry name" value="Obg"/>
    <property type="match status" value="1"/>
</dbReference>
<dbReference type="FunFam" id="2.70.210.12:FF:000001">
    <property type="entry name" value="GTPase Obg"/>
    <property type="match status" value="1"/>
</dbReference>
<dbReference type="Gene3D" id="2.70.210.12">
    <property type="entry name" value="GTP1/OBG domain"/>
    <property type="match status" value="1"/>
</dbReference>
<dbReference type="Gene3D" id="3.40.50.300">
    <property type="entry name" value="P-loop containing nucleotide triphosphate hydrolases"/>
    <property type="match status" value="1"/>
</dbReference>
<dbReference type="HAMAP" id="MF_01454">
    <property type="entry name" value="GTPase_Obg"/>
    <property type="match status" value="1"/>
</dbReference>
<dbReference type="InterPro" id="IPR031167">
    <property type="entry name" value="G_OBG"/>
</dbReference>
<dbReference type="InterPro" id="IPR006073">
    <property type="entry name" value="GTP-bd"/>
</dbReference>
<dbReference type="InterPro" id="IPR014100">
    <property type="entry name" value="GTP-bd_Obg/CgtA"/>
</dbReference>
<dbReference type="InterPro" id="IPR006074">
    <property type="entry name" value="GTP1-OBG_CS"/>
</dbReference>
<dbReference type="InterPro" id="IPR006169">
    <property type="entry name" value="GTP1_OBG_dom"/>
</dbReference>
<dbReference type="InterPro" id="IPR036726">
    <property type="entry name" value="GTP1_OBG_dom_sf"/>
</dbReference>
<dbReference type="InterPro" id="IPR045086">
    <property type="entry name" value="OBG_GTPase"/>
</dbReference>
<dbReference type="InterPro" id="IPR027417">
    <property type="entry name" value="P-loop_NTPase"/>
</dbReference>
<dbReference type="NCBIfam" id="TIGR02729">
    <property type="entry name" value="Obg_CgtA"/>
    <property type="match status" value="1"/>
</dbReference>
<dbReference type="NCBIfam" id="NF008955">
    <property type="entry name" value="PRK12297.1"/>
    <property type="match status" value="1"/>
</dbReference>
<dbReference type="NCBIfam" id="NF008956">
    <property type="entry name" value="PRK12299.1"/>
    <property type="match status" value="1"/>
</dbReference>
<dbReference type="PANTHER" id="PTHR11702">
    <property type="entry name" value="DEVELOPMENTALLY REGULATED GTP-BINDING PROTEIN-RELATED"/>
    <property type="match status" value="1"/>
</dbReference>
<dbReference type="PANTHER" id="PTHR11702:SF31">
    <property type="entry name" value="MITOCHONDRIAL RIBOSOME-ASSOCIATED GTPASE 2"/>
    <property type="match status" value="1"/>
</dbReference>
<dbReference type="Pfam" id="PF01018">
    <property type="entry name" value="GTP1_OBG"/>
    <property type="match status" value="1"/>
</dbReference>
<dbReference type="Pfam" id="PF01926">
    <property type="entry name" value="MMR_HSR1"/>
    <property type="match status" value="1"/>
</dbReference>
<dbReference type="PIRSF" id="PIRSF002401">
    <property type="entry name" value="GTP_bd_Obg/CgtA"/>
    <property type="match status" value="1"/>
</dbReference>
<dbReference type="PRINTS" id="PR00326">
    <property type="entry name" value="GTP1OBG"/>
</dbReference>
<dbReference type="SUPFAM" id="SSF82051">
    <property type="entry name" value="Obg GTP-binding protein N-terminal domain"/>
    <property type="match status" value="1"/>
</dbReference>
<dbReference type="SUPFAM" id="SSF52540">
    <property type="entry name" value="P-loop containing nucleoside triphosphate hydrolases"/>
    <property type="match status" value="1"/>
</dbReference>
<dbReference type="PROSITE" id="PS51710">
    <property type="entry name" value="G_OBG"/>
    <property type="match status" value="1"/>
</dbReference>
<dbReference type="PROSITE" id="PS00905">
    <property type="entry name" value="GTP1_OBG"/>
    <property type="match status" value="1"/>
</dbReference>
<dbReference type="PROSITE" id="PS51883">
    <property type="entry name" value="OBG"/>
    <property type="match status" value="1"/>
</dbReference>
<comment type="function">
    <text evidence="1">An essential GTPase which binds GTP, GDP and possibly (p)ppGpp with moderate affinity, with high nucleotide exchange rates and a fairly low GTP hydrolysis rate. Plays a role in control of the cell cycle, stress response, ribosome biogenesis and in those bacteria that undergo differentiation, in morphogenesis control.</text>
</comment>
<comment type="cofactor">
    <cofactor evidence="1">
        <name>Mg(2+)</name>
        <dbReference type="ChEBI" id="CHEBI:18420"/>
    </cofactor>
</comment>
<comment type="subunit">
    <text evidence="1">Monomer.</text>
</comment>
<comment type="subcellular location">
    <subcellularLocation>
        <location evidence="1">Cytoplasm</location>
    </subcellularLocation>
</comment>
<comment type="similarity">
    <text evidence="1">Belongs to the TRAFAC class OBG-HflX-like GTPase superfamily. OBG GTPase family.</text>
</comment>
<keyword id="KW-0963">Cytoplasm</keyword>
<keyword id="KW-0342">GTP-binding</keyword>
<keyword id="KW-0378">Hydrolase</keyword>
<keyword id="KW-0460">Magnesium</keyword>
<keyword id="KW-0479">Metal-binding</keyword>
<keyword id="KW-0547">Nucleotide-binding</keyword>
<protein>
    <recommendedName>
        <fullName evidence="1">GTPase Obg</fullName>
        <ecNumber evidence="1">3.6.5.-</ecNumber>
    </recommendedName>
    <alternativeName>
        <fullName evidence="1">GTP-binding protein Obg</fullName>
    </alternativeName>
</protein>
<organism>
    <name type="scientific">Vibrio vulnificus (strain CMCP6)</name>
    <dbReference type="NCBI Taxonomy" id="216895"/>
    <lineage>
        <taxon>Bacteria</taxon>
        <taxon>Pseudomonadati</taxon>
        <taxon>Pseudomonadota</taxon>
        <taxon>Gammaproteobacteria</taxon>
        <taxon>Vibrionales</taxon>
        <taxon>Vibrionaceae</taxon>
        <taxon>Vibrio</taxon>
    </lineage>
</organism>
<sequence length="389" mass="43377">MKFVDEAVIKVQAGDGGNGVVSFWREKFVTKGGPDGGDGGDGGDVYIQADENLNTLIDYRFQRFYEAERGQNGSGGNCTGKRGKDITLRVPVGTRAVDIHTNEIVAEVAEHGKKVMVAKGGWHGLGNTRFKSSVNRAPRQKTMGTKGEIRELRLELLLLADVGMLGLPNAGKSTFIRAVFAAKPKVADYPFTTLIPSLGVVSVVPEKSFVVADIPGLIEGAADGAGLGIRFLKHLERCRVLLHMIDIFPIDQSDPVQNALTIIDELEQYSEKLANKPRWLVFNKVDLVSEEQADEIIQEVIDALGWEEQYFKISAVNRQGTKELCYKLADFMEQLPREEQEVSEEEKVNFMWDYHPDANQGEVITEDDDDDWDDWDDEEDDGHVIYVRE</sequence>
<gene>
    <name evidence="1" type="primary">obg</name>
    <name type="ordered locus">VV1_0669</name>
</gene>
<feature type="chain" id="PRO_0000386384" description="GTPase Obg">
    <location>
        <begin position="1"/>
        <end position="389"/>
    </location>
</feature>
<feature type="domain" description="Obg" evidence="2">
    <location>
        <begin position="1"/>
        <end position="159"/>
    </location>
</feature>
<feature type="domain" description="OBG-type G" evidence="1">
    <location>
        <begin position="160"/>
        <end position="333"/>
    </location>
</feature>
<feature type="region of interest" description="Disordered" evidence="3">
    <location>
        <begin position="359"/>
        <end position="389"/>
    </location>
</feature>
<feature type="compositionally biased region" description="Acidic residues" evidence="3">
    <location>
        <begin position="364"/>
        <end position="381"/>
    </location>
</feature>
<feature type="binding site" evidence="1">
    <location>
        <begin position="166"/>
        <end position="173"/>
    </location>
    <ligand>
        <name>GTP</name>
        <dbReference type="ChEBI" id="CHEBI:37565"/>
    </ligand>
</feature>
<feature type="binding site" evidence="1">
    <location>
        <position position="173"/>
    </location>
    <ligand>
        <name>Mg(2+)</name>
        <dbReference type="ChEBI" id="CHEBI:18420"/>
    </ligand>
</feature>
<feature type="binding site" evidence="1">
    <location>
        <begin position="191"/>
        <end position="195"/>
    </location>
    <ligand>
        <name>GTP</name>
        <dbReference type="ChEBI" id="CHEBI:37565"/>
    </ligand>
</feature>
<feature type="binding site" evidence="1">
    <location>
        <position position="193"/>
    </location>
    <ligand>
        <name>Mg(2+)</name>
        <dbReference type="ChEBI" id="CHEBI:18420"/>
    </ligand>
</feature>
<feature type="binding site" evidence="1">
    <location>
        <begin position="213"/>
        <end position="216"/>
    </location>
    <ligand>
        <name>GTP</name>
        <dbReference type="ChEBI" id="CHEBI:37565"/>
    </ligand>
</feature>
<feature type="binding site" evidence="1">
    <location>
        <begin position="283"/>
        <end position="286"/>
    </location>
    <ligand>
        <name>GTP</name>
        <dbReference type="ChEBI" id="CHEBI:37565"/>
    </ligand>
</feature>
<feature type="binding site" evidence="1">
    <location>
        <begin position="314"/>
        <end position="316"/>
    </location>
    <ligand>
        <name>GTP</name>
        <dbReference type="ChEBI" id="CHEBI:37565"/>
    </ligand>
</feature>
<reference key="1">
    <citation type="submission" date="2002-12" db="EMBL/GenBank/DDBJ databases">
        <title>Complete genome sequence of Vibrio vulnificus CMCP6.</title>
        <authorList>
            <person name="Rhee J.H."/>
            <person name="Kim S.Y."/>
            <person name="Chung S.S."/>
            <person name="Kim J.J."/>
            <person name="Moon Y.H."/>
            <person name="Jeong H."/>
            <person name="Choy H.E."/>
        </authorList>
    </citation>
    <scope>NUCLEOTIDE SEQUENCE [LARGE SCALE GENOMIC DNA]</scope>
    <source>
        <strain>CMCP6</strain>
    </source>
</reference>